<reference key="1">
    <citation type="journal article" date="1994" name="Mol. Biol. Evol.">
        <title>Big flies, small repeats: the 'Thr-Gly' region of the period gene in Diptera.</title>
        <authorList>
            <person name="Nielsen J."/>
            <person name="Peixoto A.A."/>
            <person name="Piccin A."/>
            <person name="Costa R."/>
            <person name="Kyriacou C.P."/>
            <person name="Chalmers D."/>
        </authorList>
    </citation>
    <scope>NUCLEOTIDE SEQUENCE [GENOMIC DNA]</scope>
</reference>
<gene>
    <name type="primary">per</name>
</gene>
<accession>Q25221</accession>
<sequence length="109" mass="11600">SKSSTETPPSYNQLNYNENLQRFFNSKPITAPVDVDPHEVEQSYDASTDARSFRSPLRHFEGSGGSGSSGNFNSGSNLHIGSITNTSNTGTGTSSGSVQLITLTESLLN</sequence>
<name>PER_LOXAL</name>
<organism>
    <name type="scientific">Loxocera albiseta</name>
    <name type="common">Rust fly</name>
    <name type="synonym">Nemotelus albiseta</name>
    <dbReference type="NCBI Taxonomy" id="2887140"/>
    <lineage>
        <taxon>Eukaryota</taxon>
        <taxon>Metazoa</taxon>
        <taxon>Ecdysozoa</taxon>
        <taxon>Arthropoda</taxon>
        <taxon>Hexapoda</taxon>
        <taxon>Insecta</taxon>
        <taxon>Pterygota</taxon>
        <taxon>Neoptera</taxon>
        <taxon>Endopterygota</taxon>
        <taxon>Diptera</taxon>
        <taxon>Brachycera</taxon>
        <taxon>Muscomorpha</taxon>
        <taxon>Diopsoidea</taxon>
        <taxon>Psilidae</taxon>
        <taxon>Psilinae</taxon>
        <taxon>Loxocera</taxon>
    </lineage>
</organism>
<protein>
    <recommendedName>
        <fullName>Period circadian protein</fullName>
    </recommendedName>
</protein>
<feature type="chain" id="PRO_0000162620" description="Period circadian protein">
    <location>
        <begin position="1" status="less than"/>
        <end position="109" status="greater than"/>
    </location>
</feature>
<feature type="region of interest" description="Disordered" evidence="2">
    <location>
        <begin position="29"/>
        <end position="100"/>
    </location>
</feature>
<feature type="compositionally biased region" description="Low complexity" evidence="2">
    <location>
        <begin position="69"/>
        <end position="97"/>
    </location>
</feature>
<feature type="non-terminal residue">
    <location>
        <position position="1"/>
    </location>
</feature>
<feature type="non-terminal residue">
    <location>
        <position position="109"/>
    </location>
</feature>
<comment type="function">
    <text evidence="1">Essential for biological clock functions. Determines the period length of circadian and ultradian rhythms; an increase in PER dosage leads to shortened circadian rhythms and a decrease leads to lengthened circadian rhythms. Essential for the circadian rhythmicity of locomotor activity, eclosion behavior, and for the rhythmic component of the male courtship song that originates in the thoracic nervous system. The biological cycle depends on the rhythmic formation and nuclear localization of the TIM-PER complex. Light induces the degradation of TIM, which promotes elimination of PER. Nuclear activity of the heterodimer coordinatively regulates PER and TIM transcription through a negative feedback loop. Behaves as a negative element in circadian transcriptional loop. Does not appear to bind DNA, suggesting indirect transcriptional inhibition (By similarity).</text>
</comment>
<comment type="subunit">
    <text evidence="1">Forms a heterodimer with timeless (TIM); the complex then translocates into the nucleus.</text>
</comment>
<comment type="subcellular location">
    <subcellularLocation>
        <location evidence="1">Nucleus</location>
    </subcellularLocation>
    <subcellularLocation>
        <location evidence="1">Cytoplasm</location>
        <location evidence="1">Perinuclear region</location>
    </subcellularLocation>
    <text evidence="1">Nuclear at specific periods of the day. First accumulates in the perinuclear region about one hour before translocation into the nucleus. Interaction with Tim is required for nuclear localization (By similarity).</text>
</comment>
<comment type="PTM">
    <text evidence="1">Phosphorylated with a circadian rhythmicity, probably by the double-time protein (dbt). Phosphorylation could be implicated in the stability of per monomer and in the formation of heterodimer per-tim (By similarity).</text>
</comment>
<dbReference type="EMBL" id="U11806">
    <property type="protein sequence ID" value="AAA76593.1"/>
    <property type="molecule type" value="Genomic_DNA"/>
</dbReference>
<dbReference type="GO" id="GO:0005634">
    <property type="term" value="C:nucleus"/>
    <property type="evidence" value="ECO:0007669"/>
    <property type="project" value="UniProtKB-SubCell"/>
</dbReference>
<dbReference type="GO" id="GO:0048471">
    <property type="term" value="C:perinuclear region of cytoplasm"/>
    <property type="evidence" value="ECO:0007669"/>
    <property type="project" value="UniProtKB-SubCell"/>
</dbReference>
<dbReference type="GO" id="GO:0048511">
    <property type="term" value="P:rhythmic process"/>
    <property type="evidence" value="ECO:0007669"/>
    <property type="project" value="UniProtKB-KW"/>
</dbReference>
<proteinExistence type="inferred from homology"/>
<keyword id="KW-0090">Biological rhythms</keyword>
<keyword id="KW-0963">Cytoplasm</keyword>
<keyword id="KW-0539">Nucleus</keyword>
<keyword id="KW-0597">Phosphoprotein</keyword>
<keyword id="KW-0677">Repeat</keyword>
<evidence type="ECO:0000250" key="1"/>
<evidence type="ECO:0000256" key="2">
    <source>
        <dbReference type="SAM" id="MobiDB-lite"/>
    </source>
</evidence>